<dbReference type="EC" id="1.3.1.-" evidence="1 2"/>
<dbReference type="EMBL" id="AB812091">
    <property type="protein sequence ID" value="BAO04454.1"/>
    <property type="molecule type" value="Genomic_DNA"/>
</dbReference>
<dbReference type="RefSeq" id="WP_003641675.1">
    <property type="nucleotide sequence ID" value="NZ_AP018405.1"/>
</dbReference>
<dbReference type="PDB" id="4QLX">
    <property type="method" value="X-ray"/>
    <property type="resolution" value="1.95 A"/>
    <property type="chains" value="A/B=1-217"/>
</dbReference>
<dbReference type="PDB" id="4QLY">
    <property type="method" value="X-ray"/>
    <property type="resolution" value="2.00 A"/>
    <property type="chains" value="A/B/C/D=1-217"/>
</dbReference>
<dbReference type="PDBsum" id="4QLX"/>
<dbReference type="PDBsum" id="4QLY"/>
<dbReference type="SMR" id="P0DX42"/>
<dbReference type="GeneID" id="77216742"/>
<dbReference type="OMA" id="MVLIFAD"/>
<dbReference type="UniPathway" id="UPA00199"/>
<dbReference type="GO" id="GO:0000166">
    <property type="term" value="F:nucleotide binding"/>
    <property type="evidence" value="ECO:0007669"/>
    <property type="project" value="UniProtKB-KW"/>
</dbReference>
<dbReference type="GO" id="GO:0016491">
    <property type="term" value="F:oxidoreductase activity"/>
    <property type="evidence" value="ECO:0007669"/>
    <property type="project" value="UniProtKB-KW"/>
</dbReference>
<dbReference type="GO" id="GO:0006631">
    <property type="term" value="P:fatty acid metabolic process"/>
    <property type="evidence" value="ECO:0007669"/>
    <property type="project" value="UniProtKB-UniPathway"/>
</dbReference>
<dbReference type="GO" id="GO:0009636">
    <property type="term" value="P:response to toxic substance"/>
    <property type="evidence" value="ECO:0007669"/>
    <property type="project" value="UniProtKB-KW"/>
</dbReference>
<dbReference type="CDD" id="cd02137">
    <property type="entry name" value="MhqN-like"/>
    <property type="match status" value="1"/>
</dbReference>
<dbReference type="Gene3D" id="3.40.109.10">
    <property type="entry name" value="NADH Oxidase"/>
    <property type="match status" value="1"/>
</dbReference>
<dbReference type="InterPro" id="IPR029479">
    <property type="entry name" value="Nitroreductase"/>
</dbReference>
<dbReference type="InterPro" id="IPR000415">
    <property type="entry name" value="Nitroreductase-like"/>
</dbReference>
<dbReference type="PANTHER" id="PTHR43673">
    <property type="entry name" value="NAD(P)H NITROREDUCTASE YDGI-RELATED"/>
    <property type="match status" value="1"/>
</dbReference>
<dbReference type="PANTHER" id="PTHR43673:SF10">
    <property type="entry name" value="NADH DEHYDROGENASE_NAD(P)H NITROREDUCTASE XCC3605-RELATED"/>
    <property type="match status" value="1"/>
</dbReference>
<dbReference type="Pfam" id="PF00881">
    <property type="entry name" value="Nitroreductase"/>
    <property type="match status" value="1"/>
</dbReference>
<dbReference type="SUPFAM" id="SSF55469">
    <property type="entry name" value="FMN-dependent nitroreductase-like"/>
    <property type="match status" value="1"/>
</dbReference>
<comment type="function">
    <text evidence="1 2">Is involved in a saturation metabolic pathway of polyunsaturated fatty acids, that detoxifies unsaturated fatty acids and generates hydroxy fatty acids, oxo fatty acids, conjugated fatty acids such as conjugated linoleic acids (CLAs), and partially saturated trans-fatty acids as intermediates. CLA-ER catalyzes the saturation of the carbon-carbon double bond in 10-oxo-(11E)-octadecenoate to produce 10-oxooctadecanoate, during linoleate metabolism (PubMed:24127592, PubMed:25702712). As part of the gut microbiome, this enzyme modifies host fatty acid composition and is expected to improve human health by altering lipid metabolism related to the onset of metabolic syndrome (PubMed:24127592).</text>
</comment>
<comment type="catalytic activity">
    <reaction evidence="1 2">
        <text>10-oxo-(11E)-octadecenoate + NADH + H(+) = 10-oxooctadecanoate + NAD(+)</text>
        <dbReference type="Rhea" id="RHEA:75739"/>
        <dbReference type="ChEBI" id="CHEBI:15378"/>
        <dbReference type="ChEBI" id="CHEBI:57540"/>
        <dbReference type="ChEBI" id="CHEBI:57945"/>
        <dbReference type="ChEBI" id="CHEBI:194436"/>
        <dbReference type="ChEBI" id="CHEBI:194437"/>
    </reaction>
    <physiologicalReaction direction="left-to-right" evidence="1">
        <dbReference type="Rhea" id="RHEA:75740"/>
    </physiologicalReaction>
</comment>
<comment type="cofactor">
    <cofactor evidence="2">
        <name>FMN</name>
        <dbReference type="ChEBI" id="CHEBI:58210"/>
    </cofactor>
</comment>
<comment type="pathway">
    <text evidence="1">Lipid metabolism; fatty acid metabolism.</text>
</comment>
<comment type="subunit">
    <text evidence="2">Homodimer.</text>
</comment>
<comment type="similarity">
    <text evidence="4">Belongs to the nitroreductase family.</text>
</comment>
<proteinExistence type="evidence at protein level"/>
<name>CLAER_LACPN</name>
<reference evidence="6" key="1">
    <citation type="journal article" date="2013" name="Proc. Natl. Acad. Sci. U.S.A.">
        <title>Polyunsaturated fatty acid saturation by gut lactic acid bacteria affecting host lipid composition.</title>
        <authorList>
            <person name="Kishino S."/>
            <person name="Takeuchi M."/>
            <person name="Park S.B."/>
            <person name="Hirata A."/>
            <person name="Kitamura N."/>
            <person name="Kunisawa J."/>
            <person name="Kiyono H."/>
            <person name="Iwamoto R."/>
            <person name="Isobe Y."/>
            <person name="Arita M."/>
            <person name="Arai H."/>
            <person name="Ueda K."/>
            <person name="Shima J."/>
            <person name="Takahashi S."/>
            <person name="Yokozeki K."/>
            <person name="Shimizu S."/>
            <person name="Ogawa J."/>
        </authorList>
    </citation>
    <scope>NUCLEOTIDE SEQUENCE [GENOMIC DNA]</scope>
    <scope>FUNCTION</scope>
    <scope>CATALYTIC ACTIVITY</scope>
    <source>
        <strain evidence="6">AKU 1009a</strain>
    </source>
</reference>
<reference evidence="7 8" key="2">
    <citation type="journal article" date="2015" name="FEBS J.">
        <title>Structure and reaction mechanism of a novel enone reductase.</title>
        <authorList>
            <person name="Hou F."/>
            <person name="Miyakawa T."/>
            <person name="Kitamura N."/>
            <person name="Takeuchi M."/>
            <person name="Park S.B."/>
            <person name="Kishino S."/>
            <person name="Ogawa J."/>
            <person name="Tanokura M."/>
        </authorList>
    </citation>
    <scope>X-RAY CRYSTALLOGRAPHY (1.95 ANGSTROMS) IN COMPLEXES WITH FMN AND 10-OXO-OCTADECANOATE</scope>
    <scope>FUNCTION</scope>
    <scope>CATALYTIC ACTIVITY</scope>
    <scope>COFACTOR</scope>
    <scope>SUBUNIT</scope>
    <scope>REACTION MECHANISM</scope>
    <scope>MUTAGENESIS OF CYS-51; TYR-101 AND PHE-126</scope>
    <source>
        <strain>AKU 1009a</strain>
    </source>
</reference>
<keyword id="KW-0002">3D-structure</keyword>
<keyword id="KW-0216">Detoxification</keyword>
<keyword id="KW-0285">Flavoprotein</keyword>
<keyword id="KW-0288">FMN</keyword>
<keyword id="KW-0520">NAD</keyword>
<keyword id="KW-0547">Nucleotide-binding</keyword>
<keyword id="KW-0560">Oxidoreductase</keyword>
<organism>
    <name type="scientific">Lactiplantibacillus plantarum</name>
    <name type="common">Lactobacillus plantarum</name>
    <dbReference type="NCBI Taxonomy" id="1590"/>
    <lineage>
        <taxon>Bacteria</taxon>
        <taxon>Bacillati</taxon>
        <taxon>Bacillota</taxon>
        <taxon>Bacilli</taxon>
        <taxon>Lactobacillales</taxon>
        <taxon>Lactobacillaceae</taxon>
        <taxon>Lactiplantibacillus</taxon>
    </lineage>
</organism>
<sequence>MSEAVKNLVNNDLADVMFNRHSVRQFDPNVKIGRDELQKMIAEAATAPSACNLQSWHFVVVDTPEAKAKFKQAVMKFNYPQVDSASAIVFIAGDTQSHYVYRDVWNKVYEDGNITKERLDQILGTFLPLYENATPDFLKFDATIDCSVVGMQLLLVARAHGYDANAFSGIDFEKMIPTLGLDPKRYVPVMGIAIGKAAQEPLHTTRYDAKTQTDFLA</sequence>
<protein>
    <recommendedName>
        <fullName evidence="5">CLA biosynthesis enone reductase</fullName>
        <shortName evidence="3">CLA-ER</shortName>
        <ecNumber evidence="1 2">1.3.1.-</ecNumber>
    </recommendedName>
</protein>
<feature type="chain" id="PRO_0000458874" description="CLA biosynthesis enone reductase">
    <location>
        <begin position="1"/>
        <end position="217"/>
    </location>
</feature>
<feature type="binding site" evidence="2 7 8">
    <location>
        <position position="20"/>
    </location>
    <ligand>
        <name>FMN</name>
        <dbReference type="ChEBI" id="CHEBI:58210"/>
    </ligand>
</feature>
<feature type="binding site" evidence="2 7 8">
    <location>
        <position position="22"/>
    </location>
    <ligand>
        <name>FMN</name>
        <dbReference type="ChEBI" id="CHEBI:58210"/>
    </ligand>
</feature>
<feature type="binding site" evidence="2 7 8">
    <location>
        <position position="24"/>
    </location>
    <ligand>
        <name>FMN</name>
        <dbReference type="ChEBI" id="CHEBI:58210"/>
    </ligand>
</feature>
<feature type="binding site" evidence="2 7">
    <location>
        <position position="51"/>
    </location>
    <ligand>
        <name>10-oxooctadecanoate</name>
        <dbReference type="ChEBI" id="CHEBI:194437"/>
    </ligand>
</feature>
<feature type="binding site" evidence="2 7 8">
    <location>
        <position position="78"/>
    </location>
    <ligand>
        <name>FMN</name>
        <dbReference type="ChEBI" id="CHEBI:58210"/>
    </ligand>
</feature>
<feature type="binding site" evidence="2 7">
    <location>
        <position position="81"/>
    </location>
    <ligand>
        <name>FMN</name>
        <dbReference type="ChEBI" id="CHEBI:58210"/>
    </ligand>
</feature>
<feature type="binding site" evidence="2 7">
    <location>
        <position position="118"/>
    </location>
    <ligand>
        <name>10-oxooctadecanoate</name>
        <dbReference type="ChEBI" id="CHEBI:194437"/>
    </ligand>
</feature>
<feature type="binding site" evidence="2 7 8">
    <location>
        <position position="165"/>
    </location>
    <ligand>
        <name>FMN</name>
        <dbReference type="ChEBI" id="CHEBI:58210"/>
    </ligand>
</feature>
<feature type="binding site" evidence="2 7 8">
    <location>
        <position position="168"/>
    </location>
    <ligand>
        <name>FMN</name>
        <dbReference type="ChEBI" id="CHEBI:58210"/>
    </ligand>
</feature>
<feature type="binding site" evidence="2 7 8">
    <location>
        <position position="169"/>
    </location>
    <ligand>
        <name>FMN</name>
        <dbReference type="ChEBI" id="CHEBI:58210"/>
    </ligand>
</feature>
<feature type="binding site" evidence="2 7 8">
    <location>
        <position position="206"/>
    </location>
    <ligand>
        <name>FMN</name>
        <dbReference type="ChEBI" id="CHEBI:58210"/>
    </ligand>
</feature>
<feature type="mutagenesis site" description="38% of wild-type catalytic activity." evidence="2">
    <original>C</original>
    <variation>A</variation>
    <location>
        <position position="51"/>
    </location>
</feature>
<feature type="mutagenesis site" description="Almost no change in catalytic activity." evidence="2">
    <original>C</original>
    <variation>S</variation>
    <location>
        <position position="51"/>
    </location>
</feature>
<feature type="mutagenesis site" description="5% of wild-type catalytic activity." evidence="2">
    <original>Y</original>
    <variation>F</variation>
    <location>
        <position position="101"/>
    </location>
</feature>
<feature type="mutagenesis site" description="15% of wild-type catalytic activity." evidence="2">
    <original>F</original>
    <variation>A</variation>
    <location>
        <position position="126"/>
    </location>
</feature>
<accession>P0DX42</accession>
<evidence type="ECO:0000269" key="1">
    <source>
    </source>
</evidence>
<evidence type="ECO:0000269" key="2">
    <source>
    </source>
</evidence>
<evidence type="ECO:0000303" key="3">
    <source>
    </source>
</evidence>
<evidence type="ECO:0000305" key="4"/>
<evidence type="ECO:0000305" key="5">
    <source>
    </source>
</evidence>
<evidence type="ECO:0000312" key="6">
    <source>
        <dbReference type="EMBL" id="BAO04454.1"/>
    </source>
</evidence>
<evidence type="ECO:0007744" key="7">
    <source>
        <dbReference type="PDB" id="4QLX"/>
    </source>
</evidence>
<evidence type="ECO:0007744" key="8">
    <source>
        <dbReference type="PDB" id="4QLY"/>
    </source>
</evidence>
<gene>
    <name evidence="3 6" type="primary">cla-er</name>
</gene>